<feature type="initiator methionine" description="Removed" evidence="15 22 24 26">
    <location>
        <position position="1"/>
    </location>
</feature>
<feature type="chain" id="PRO_0000058325" description="Peroxisomal membrane protein PEX14">
    <location>
        <begin position="2"/>
        <end position="377"/>
    </location>
</feature>
<feature type="topological domain" description="Peroxisomal matrix" evidence="2">
    <location>
        <begin position="2"/>
        <end position="108"/>
    </location>
</feature>
<feature type="transmembrane region" description="Helical" evidence="3">
    <location>
        <begin position="109"/>
        <end position="126"/>
    </location>
</feature>
<feature type="topological domain" description="Cytoplasmic" evidence="2">
    <location>
        <begin position="127"/>
        <end position="377"/>
    </location>
</feature>
<feature type="region of interest" description="Disordered" evidence="4">
    <location>
        <begin position="1"/>
        <end position="24"/>
    </location>
</feature>
<feature type="region of interest" description="Disordered" evidence="4">
    <location>
        <begin position="230"/>
        <end position="377"/>
    </location>
</feature>
<feature type="compositionally biased region" description="Low complexity" evidence="4">
    <location>
        <begin position="1"/>
        <end position="15"/>
    </location>
</feature>
<feature type="compositionally biased region" description="Low complexity" evidence="4">
    <location>
        <begin position="244"/>
        <end position="259"/>
    </location>
</feature>
<feature type="compositionally biased region" description="Low complexity" evidence="4">
    <location>
        <begin position="265"/>
        <end position="275"/>
    </location>
</feature>
<feature type="compositionally biased region" description="Acidic residues" evidence="4">
    <location>
        <begin position="323"/>
        <end position="342"/>
    </location>
</feature>
<feature type="compositionally biased region" description="Basic and acidic residues" evidence="4">
    <location>
        <begin position="360"/>
        <end position="377"/>
    </location>
</feature>
<feature type="modified residue" description="N-acetylalanine" evidence="15 22 24 26">
    <location>
        <position position="2"/>
    </location>
</feature>
<feature type="modified residue" description="N6-acetyllysine" evidence="23">
    <location>
        <position position="34"/>
    </location>
</feature>
<feature type="modified residue" description="Phosphoserine" evidence="25">
    <location>
        <position position="232"/>
    </location>
</feature>
<feature type="modified residue" description="Phosphoserine" evidence="2">
    <location>
        <position position="282"/>
    </location>
</feature>
<feature type="modified residue" description="Phosphoserine" evidence="21">
    <location>
        <position position="335"/>
    </location>
</feature>
<feature type="splice variant" id="VSP_037021" description="In isoform 2." evidence="16">
    <location>
        <begin position="58"/>
        <end position="100"/>
    </location>
</feature>
<feature type="sequence variant" id="VAR_051269" description="In dbSNP:rs12061667.">
    <original>A</original>
    <variation>S</variation>
    <location>
        <position position="117"/>
    </location>
</feature>
<feature type="sequence variant" id="VAR_051270" description="In dbSNP:rs11539793.">
    <original>A</original>
    <variation>S</variation>
    <location>
        <position position="150"/>
    </location>
</feature>
<feature type="sequence variant" id="VAR_051271" description="In dbSNP:rs12070353.">
    <original>R</original>
    <variation>K</variation>
    <location>
        <position position="320"/>
    </location>
</feature>
<feature type="mutagenesis site" description="Reduced interaction with PEX19, minor effect on interaction with PEX5." evidence="9">
    <original>F</original>
    <variation>A</variation>
    <variation>W</variation>
    <location>
        <position position="52"/>
    </location>
</feature>
<feature type="mutagenesis site" description="Reduced interaction with PEX19, minor effect on interaction with PEX5." evidence="9">
    <original>K</original>
    <variation>A</variation>
    <variation>E</variation>
    <location>
        <position position="56"/>
    </location>
</feature>
<feature type="sequence conflict" description="In Ref. 3; BAG51028." evidence="18" ref="3">
    <original>K</original>
    <variation>E</variation>
    <location>
        <position position="319"/>
    </location>
</feature>
<feature type="strand" evidence="28">
    <location>
        <begin position="19"/>
        <end position="22"/>
    </location>
</feature>
<feature type="helix" evidence="27">
    <location>
        <begin position="26"/>
        <end position="36"/>
    </location>
</feature>
<feature type="helix" evidence="27">
    <location>
        <begin position="41"/>
        <end position="43"/>
    </location>
</feature>
<feature type="helix" evidence="27">
    <location>
        <begin position="46"/>
        <end position="55"/>
    </location>
</feature>
<feature type="helix" evidence="27">
    <location>
        <begin position="60"/>
        <end position="70"/>
    </location>
</feature>
<comment type="function">
    <text evidence="1 10 12 13 14">Component of the PEX13-PEX14 docking complex, a translocon channel that specifically mediates the import of peroxisomal cargo proteins bound to PEX5 receptor (PubMed:24235149, PubMed:28765278, PubMed:9653144). The PEX13-PEX14 docking complex forms a large import pore which can be opened to a diameter of about 9 nm (By similarity). Mechanistically, PEX5 receptor along with cargo proteins associates with the PEX14 subunit of the PEX13-PEX14 docking complex in the cytosol, leading to the insertion of the receptor into the organelle membrane with the concomitant translocation of the cargo into the peroxisome matrix (PubMed:24235149, PubMed:28765278). Plays a key role for peroxisome movement through a direct interaction with tubulin (PubMed:21525035).</text>
</comment>
<comment type="subunit">
    <text evidence="5 6 7 9 10 11 12 13 14">Interacts with PEX13; forming the PEX13-PEX14 docking complex (PubMed:28765278, PubMed:9653144). Interacts with PEX5 (via WxxxF/Y motifs) (PubMed:11438541, PubMed:12488033, PubMed:19197237, PubMed:21976670, PubMed:24235149, PubMed:28765278, PubMed:9653144). Interacts with PEX19 (PubMed:10704444, PubMed:12488033). Interacts with tubulin (PubMed:21525035).</text>
</comment>
<comment type="interaction">
    <interactant intactId="EBI-594898">
        <id>O75381</id>
    </interactant>
    <interactant intactId="EBI-6871750">
        <id>Q9BS16</id>
        <label>CENPK</label>
    </interactant>
    <organismsDiffer>false</organismsDiffer>
    <experiments>3</experiments>
</comment>
<comment type="interaction">
    <interactant intactId="EBI-594898">
        <id>O75381</id>
    </interactant>
    <interactant intactId="EBI-742413">
        <id>Q9BT78</id>
        <label>COPS4</label>
    </interactant>
    <organismsDiffer>false</organismsDiffer>
    <experiments>3</experiments>
</comment>
<comment type="interaction">
    <interactant intactId="EBI-594898">
        <id>O75381</id>
    </interactant>
    <interactant intactId="EBI-2515857">
        <id>O43681</id>
        <label>GET3</label>
    </interactant>
    <organismsDiffer>false</organismsDiffer>
    <experiments>3</experiments>
</comment>
<comment type="interaction">
    <interactant intactId="EBI-594898">
        <id>O75381</id>
    </interactant>
    <interactant intactId="EBI-5235902">
        <id>Q9Y4F3</id>
        <label>MARF1</label>
    </interactant>
    <organismsDiffer>false</organismsDiffer>
    <experiments>3</experiments>
</comment>
<comment type="interaction">
    <interactant intactId="EBI-594898">
        <id>O75381</id>
    </interactant>
    <interactant intactId="EBI-594747">
        <id>P40855</id>
        <label>PEX19</label>
    </interactant>
    <organismsDiffer>false</organismsDiffer>
    <experiments>31</experiments>
</comment>
<comment type="interaction">
    <interactant intactId="EBI-594898">
        <id>O75381</id>
    </interactant>
    <interactant intactId="EBI-597835">
        <id>P50542</id>
        <label>PEX5</label>
    </interactant>
    <organismsDiffer>false</organismsDiffer>
    <experiments>13</experiments>
</comment>
<comment type="subcellular location">
    <subcellularLocation>
        <location evidence="9">Peroxisome membrane</location>
        <topology evidence="2">Single-pass membrane protein</topology>
    </subcellularLocation>
</comment>
<comment type="alternative products">
    <event type="alternative splicing"/>
    <isoform>
        <id>O75381-1</id>
        <name>1</name>
        <sequence type="displayed"/>
    </isoform>
    <isoform>
        <id>O75381-2</id>
        <name>2</name>
        <sequence type="described" ref="VSP_037021"/>
    </isoform>
</comment>
<comment type="disease" evidence="8">
    <disease id="DI-02154">
        <name>Peroxisome biogenesis disorder complementation group K</name>
        <acronym>PBD-CGK</acronym>
        <description>A peroxisomal disorder arising from a failure of protein import into the peroxisomal membrane or matrix. The peroxisome biogenesis disorders (PBD group) are genetically heterogeneous with at least 14 distinct genetic groups as concluded from complementation studies. Include disorders are: Zellweger syndrome (ZWS), neonatal adrenoleukodystrophy (NALD), infantile Refsum disease (IRD), and classical rhizomelic chondrodysplasia punctata (RCDP). ZWS, NALD and IRD are distinct from RCDP and constitute a clinical continuum of overlapping phenotypes known as the Zellweger spectrum (PBD-ZSS).</description>
        <dbReference type="MIM" id="614887"/>
    </disease>
    <text>The disease is caused by variants affecting the gene represented in this entry.</text>
</comment>
<comment type="disease" evidence="8">
    <disease id="DI-03596">
        <name>Peroxisome biogenesis disorder 13A</name>
        <acronym>PBD13A</acronym>
        <description>A fatal peroxisome biogenesis disorder belonging to the Zellweger disease spectrum and clinically characterized by severe neurologic dysfunction with profound psychomotor retardation, severe hypotonia and neonatal seizures, craniofacial abnormalities, liver dysfunction, and biochemically by the absence of peroxisomes. Additional features include cardiovascular and skeletal defects, renal cysts, ocular abnormalities, and hearing impairment. Most severely affected individuals with the classic form of the disease (classic Zellweger syndrome) die within the first year of life.</description>
        <dbReference type="MIM" id="614887"/>
    </disease>
    <text>The disease is caused by variants affecting the gene represented in this entry.</text>
</comment>
<comment type="similarity">
    <text evidence="18">Belongs to the peroxin-14 family.</text>
</comment>
<organism>
    <name type="scientific">Homo sapiens</name>
    <name type="common">Human</name>
    <dbReference type="NCBI Taxonomy" id="9606"/>
    <lineage>
        <taxon>Eukaryota</taxon>
        <taxon>Metazoa</taxon>
        <taxon>Chordata</taxon>
        <taxon>Craniata</taxon>
        <taxon>Vertebrata</taxon>
        <taxon>Euteleostomi</taxon>
        <taxon>Mammalia</taxon>
        <taxon>Eutheria</taxon>
        <taxon>Euarchontoglires</taxon>
        <taxon>Primates</taxon>
        <taxon>Haplorrhini</taxon>
        <taxon>Catarrhini</taxon>
        <taxon>Hominidae</taxon>
        <taxon>Homo</taxon>
    </lineage>
</organism>
<name>PEX14_HUMAN</name>
<sequence>MASSEQAEQPSQPSSTPGSENVLPREPLIATAVKFLQNSRVRQSPLATRRAFLKKKGLTDEEIDMAFQQSGTAADEPSSLGPATQVVPVQPPHLISQPYSPAGSRWRDYGALAIIMAGIAFGFHQLYKKYLLPLILGGREDRKQLERMEAGLSELSGSVAQTVTQLQTTLASVQELLIQQQQKIQELAHELAAAKATTSTNWILESQNINELKSEINSLKGLLLNRRQFPPSPSAPKIPSWQIPVKSPSPSSPAAVNHHSSSDISPVSNESTSSSPGKEGHSPEGSTVTYHLLGPQEEGEGVVDVKGQVRMEVQGEEEKREDKEDEEDEEDDDVSHVDEEDCLGVQREDRRGGDGQINEQVEKLRRPEGASNESERD</sequence>
<protein>
    <recommendedName>
        <fullName evidence="18">Peroxisomal membrane protein PEX14</fullName>
    </recommendedName>
    <alternativeName>
        <fullName>PTS1 receptor-docking protein</fullName>
    </alternativeName>
    <alternativeName>
        <fullName evidence="18">Peroxin-14</fullName>
    </alternativeName>
    <alternativeName>
        <fullName>Peroxisomal membrane anchor protein PEX14</fullName>
    </alternativeName>
</protein>
<evidence type="ECO:0000250" key="1">
    <source>
        <dbReference type="UniProtKB" id="P53112"/>
    </source>
</evidence>
<evidence type="ECO:0000250" key="2">
    <source>
        <dbReference type="UniProtKB" id="Q642G4"/>
    </source>
</evidence>
<evidence type="ECO:0000255" key="3"/>
<evidence type="ECO:0000256" key="4">
    <source>
        <dbReference type="SAM" id="MobiDB-lite"/>
    </source>
</evidence>
<evidence type="ECO:0000269" key="5">
    <source>
    </source>
</evidence>
<evidence type="ECO:0000269" key="6">
    <source>
    </source>
</evidence>
<evidence type="ECO:0000269" key="7">
    <source>
    </source>
</evidence>
<evidence type="ECO:0000269" key="8">
    <source>
    </source>
</evidence>
<evidence type="ECO:0000269" key="9">
    <source>
    </source>
</evidence>
<evidence type="ECO:0000269" key="10">
    <source>
    </source>
</evidence>
<evidence type="ECO:0000269" key="11">
    <source>
    </source>
</evidence>
<evidence type="ECO:0000269" key="12">
    <source>
    </source>
</evidence>
<evidence type="ECO:0000269" key="13">
    <source>
    </source>
</evidence>
<evidence type="ECO:0000269" key="14">
    <source>
    </source>
</evidence>
<evidence type="ECO:0000269" key="15">
    <source ref="8"/>
</evidence>
<evidence type="ECO:0000303" key="16">
    <source>
    </source>
</evidence>
<evidence type="ECO:0000303" key="17">
    <source>
    </source>
</evidence>
<evidence type="ECO:0000305" key="18"/>
<evidence type="ECO:0000312" key="19">
    <source>
        <dbReference type="HGNC" id="HGNC:8856"/>
    </source>
</evidence>
<evidence type="ECO:0007744" key="20">
    <source>
        <dbReference type="PDB" id="4BXU"/>
    </source>
</evidence>
<evidence type="ECO:0007744" key="21">
    <source>
    </source>
</evidence>
<evidence type="ECO:0007744" key="22">
    <source>
    </source>
</evidence>
<evidence type="ECO:0007744" key="23">
    <source>
    </source>
</evidence>
<evidence type="ECO:0007744" key="24">
    <source>
    </source>
</evidence>
<evidence type="ECO:0007744" key="25">
    <source>
    </source>
</evidence>
<evidence type="ECO:0007744" key="26">
    <source>
    </source>
</evidence>
<evidence type="ECO:0007829" key="27">
    <source>
        <dbReference type="PDB" id="2W84"/>
    </source>
</evidence>
<evidence type="ECO:0007829" key="28">
    <source>
        <dbReference type="PDB" id="4BXU"/>
    </source>
</evidence>
<gene>
    <name evidence="17 19" type="primary">PEX14</name>
</gene>
<reference key="1">
    <citation type="journal article" date="1998" name="Proc. Natl. Acad. Sci. U.S.A.">
        <title>Identification of a human PTS1 receptor docking protein directly required for peroxisomal protein import.</title>
        <authorList>
            <person name="Fransen M."/>
            <person name="Terlecky S.R."/>
            <person name="Subramani S."/>
        </authorList>
    </citation>
    <scope>NUCLEOTIDE SEQUENCE [MRNA] (ISOFORM 1)</scope>
    <scope>INTERACTION WITH PEX5 AND PEX13</scope>
    <scope>FUNCTION</scope>
</reference>
<reference key="2">
    <citation type="journal article" date="1999" name="J. Biol. Chem.">
        <title>The peroxin Pex14p. cDNA cloning by functional complementation on a Chinese hamster ovary cell mutant, characterization, and functional analysis.</title>
        <authorList>
            <person name="Shimizu N."/>
            <person name="Itoh R."/>
            <person name="Hirono Y."/>
            <person name="Otera H."/>
            <person name="Ghaedi K."/>
            <person name="Tateishi K."/>
            <person name="Tamura S."/>
            <person name="Okumoto K."/>
            <person name="Harano T."/>
            <person name="Mukai S."/>
            <person name="Fujiki Y."/>
        </authorList>
    </citation>
    <scope>NUCLEOTIDE SEQUENCE [MRNA] (ISOFORM 1)</scope>
</reference>
<reference key="3">
    <citation type="journal article" date="2004" name="Nat. Genet.">
        <title>Complete sequencing and characterization of 21,243 full-length human cDNAs.</title>
        <authorList>
            <person name="Ota T."/>
            <person name="Suzuki Y."/>
            <person name="Nishikawa T."/>
            <person name="Otsuki T."/>
            <person name="Sugiyama T."/>
            <person name="Irie R."/>
            <person name="Wakamatsu A."/>
            <person name="Hayashi K."/>
            <person name="Sato H."/>
            <person name="Nagai K."/>
            <person name="Kimura K."/>
            <person name="Makita H."/>
            <person name="Sekine M."/>
            <person name="Obayashi M."/>
            <person name="Nishi T."/>
            <person name="Shibahara T."/>
            <person name="Tanaka T."/>
            <person name="Ishii S."/>
            <person name="Yamamoto J."/>
            <person name="Saito K."/>
            <person name="Kawai Y."/>
            <person name="Isono Y."/>
            <person name="Nakamura Y."/>
            <person name="Nagahari K."/>
            <person name="Murakami K."/>
            <person name="Yasuda T."/>
            <person name="Iwayanagi T."/>
            <person name="Wagatsuma M."/>
            <person name="Shiratori A."/>
            <person name="Sudo H."/>
            <person name="Hosoiri T."/>
            <person name="Kaku Y."/>
            <person name="Kodaira H."/>
            <person name="Kondo H."/>
            <person name="Sugawara M."/>
            <person name="Takahashi M."/>
            <person name="Kanda K."/>
            <person name="Yokoi T."/>
            <person name="Furuya T."/>
            <person name="Kikkawa E."/>
            <person name="Omura Y."/>
            <person name="Abe K."/>
            <person name="Kamihara K."/>
            <person name="Katsuta N."/>
            <person name="Sato K."/>
            <person name="Tanikawa M."/>
            <person name="Yamazaki M."/>
            <person name="Ninomiya K."/>
            <person name="Ishibashi T."/>
            <person name="Yamashita H."/>
            <person name="Murakawa K."/>
            <person name="Fujimori K."/>
            <person name="Tanai H."/>
            <person name="Kimata M."/>
            <person name="Watanabe M."/>
            <person name="Hiraoka S."/>
            <person name="Chiba Y."/>
            <person name="Ishida S."/>
            <person name="Ono Y."/>
            <person name="Takiguchi S."/>
            <person name="Watanabe S."/>
            <person name="Yosida M."/>
            <person name="Hotuta T."/>
            <person name="Kusano J."/>
            <person name="Kanehori K."/>
            <person name="Takahashi-Fujii A."/>
            <person name="Hara H."/>
            <person name="Tanase T.-O."/>
            <person name="Nomura Y."/>
            <person name="Togiya S."/>
            <person name="Komai F."/>
            <person name="Hara R."/>
            <person name="Takeuchi K."/>
            <person name="Arita M."/>
            <person name="Imose N."/>
            <person name="Musashino K."/>
            <person name="Yuuki H."/>
            <person name="Oshima A."/>
            <person name="Sasaki N."/>
            <person name="Aotsuka S."/>
            <person name="Yoshikawa Y."/>
            <person name="Matsunawa H."/>
            <person name="Ichihara T."/>
            <person name="Shiohata N."/>
            <person name="Sano S."/>
            <person name="Moriya S."/>
            <person name="Momiyama H."/>
            <person name="Satoh N."/>
            <person name="Takami S."/>
            <person name="Terashima Y."/>
            <person name="Suzuki O."/>
            <person name="Nakagawa S."/>
            <person name="Senoh A."/>
            <person name="Mizoguchi H."/>
            <person name="Goto Y."/>
            <person name="Shimizu F."/>
            <person name="Wakebe H."/>
            <person name="Hishigaki H."/>
            <person name="Watanabe T."/>
            <person name="Sugiyama A."/>
            <person name="Takemoto M."/>
            <person name="Kawakami B."/>
            <person name="Yamazaki M."/>
            <person name="Watanabe K."/>
            <person name="Kumagai A."/>
            <person name="Itakura S."/>
            <person name="Fukuzumi Y."/>
            <person name="Fujimori Y."/>
            <person name="Komiyama M."/>
            <person name="Tashiro H."/>
            <person name="Tanigami A."/>
            <person name="Fujiwara T."/>
            <person name="Ono T."/>
            <person name="Yamada K."/>
            <person name="Fujii Y."/>
            <person name="Ozaki K."/>
            <person name="Hirao M."/>
            <person name="Ohmori Y."/>
            <person name="Kawabata A."/>
            <person name="Hikiji T."/>
            <person name="Kobatake N."/>
            <person name="Inagaki H."/>
            <person name="Ikema Y."/>
            <person name="Okamoto S."/>
            <person name="Okitani R."/>
            <person name="Kawakami T."/>
            <person name="Noguchi S."/>
            <person name="Itoh T."/>
            <person name="Shigeta K."/>
            <person name="Senba T."/>
            <person name="Matsumura K."/>
            <person name="Nakajima Y."/>
            <person name="Mizuno T."/>
            <person name="Morinaga M."/>
            <person name="Sasaki M."/>
            <person name="Togashi T."/>
            <person name="Oyama M."/>
            <person name="Hata H."/>
            <person name="Watanabe M."/>
            <person name="Komatsu T."/>
            <person name="Mizushima-Sugano J."/>
            <person name="Satoh T."/>
            <person name="Shirai Y."/>
            <person name="Takahashi Y."/>
            <person name="Nakagawa K."/>
            <person name="Okumura K."/>
            <person name="Nagase T."/>
            <person name="Nomura N."/>
            <person name="Kikuchi H."/>
            <person name="Masuho Y."/>
            <person name="Yamashita R."/>
            <person name="Nakai K."/>
            <person name="Yada T."/>
            <person name="Nakamura Y."/>
            <person name="Ohara O."/>
            <person name="Isogai T."/>
            <person name="Sugano S."/>
        </authorList>
    </citation>
    <scope>NUCLEOTIDE SEQUENCE [LARGE SCALE MRNA] (ISOFORMS 1 AND 2)</scope>
    <source>
        <tissue>Brain</tissue>
        <tissue>Cerebellum</tissue>
        <tissue>Placenta</tissue>
    </source>
</reference>
<reference key="4">
    <citation type="submission" date="2004-06" db="EMBL/GenBank/DDBJ databases">
        <title>Cloning of human full open reading frames in Gateway(TM) system entry vector (pDONR201).</title>
        <authorList>
            <person name="Halleck A."/>
            <person name="Ebert L."/>
            <person name="Mkoundinya M."/>
            <person name="Schick M."/>
            <person name="Eisenstein S."/>
            <person name="Neubert P."/>
            <person name="Kstrang K."/>
            <person name="Schatten R."/>
            <person name="Shen B."/>
            <person name="Henze S."/>
            <person name="Mar W."/>
            <person name="Korn B."/>
            <person name="Zuo D."/>
            <person name="Hu Y."/>
            <person name="LaBaer J."/>
        </authorList>
    </citation>
    <scope>NUCLEOTIDE SEQUENCE [LARGE SCALE MRNA] (ISOFORM 1)</scope>
</reference>
<reference key="5">
    <citation type="journal article" date="2006" name="Nature">
        <title>The DNA sequence and biological annotation of human chromosome 1.</title>
        <authorList>
            <person name="Gregory S.G."/>
            <person name="Barlow K.F."/>
            <person name="McLay K.E."/>
            <person name="Kaul R."/>
            <person name="Swarbreck D."/>
            <person name="Dunham A."/>
            <person name="Scott C.E."/>
            <person name="Howe K.L."/>
            <person name="Woodfine K."/>
            <person name="Spencer C.C.A."/>
            <person name="Jones M.C."/>
            <person name="Gillson C."/>
            <person name="Searle S."/>
            <person name="Zhou Y."/>
            <person name="Kokocinski F."/>
            <person name="McDonald L."/>
            <person name="Evans R."/>
            <person name="Phillips K."/>
            <person name="Atkinson A."/>
            <person name="Cooper R."/>
            <person name="Jones C."/>
            <person name="Hall R.E."/>
            <person name="Andrews T.D."/>
            <person name="Lloyd C."/>
            <person name="Ainscough R."/>
            <person name="Almeida J.P."/>
            <person name="Ambrose K.D."/>
            <person name="Anderson F."/>
            <person name="Andrew R.W."/>
            <person name="Ashwell R.I.S."/>
            <person name="Aubin K."/>
            <person name="Babbage A.K."/>
            <person name="Bagguley C.L."/>
            <person name="Bailey J."/>
            <person name="Beasley H."/>
            <person name="Bethel G."/>
            <person name="Bird C.P."/>
            <person name="Bray-Allen S."/>
            <person name="Brown J.Y."/>
            <person name="Brown A.J."/>
            <person name="Buckley D."/>
            <person name="Burton J."/>
            <person name="Bye J."/>
            <person name="Carder C."/>
            <person name="Chapman J.C."/>
            <person name="Clark S.Y."/>
            <person name="Clarke G."/>
            <person name="Clee C."/>
            <person name="Cobley V."/>
            <person name="Collier R.E."/>
            <person name="Corby N."/>
            <person name="Coville G.J."/>
            <person name="Davies J."/>
            <person name="Deadman R."/>
            <person name="Dunn M."/>
            <person name="Earthrowl M."/>
            <person name="Ellington A.G."/>
            <person name="Errington H."/>
            <person name="Frankish A."/>
            <person name="Frankland J."/>
            <person name="French L."/>
            <person name="Garner P."/>
            <person name="Garnett J."/>
            <person name="Gay L."/>
            <person name="Ghori M.R.J."/>
            <person name="Gibson R."/>
            <person name="Gilby L.M."/>
            <person name="Gillett W."/>
            <person name="Glithero R.J."/>
            <person name="Grafham D.V."/>
            <person name="Griffiths C."/>
            <person name="Griffiths-Jones S."/>
            <person name="Grocock R."/>
            <person name="Hammond S."/>
            <person name="Harrison E.S.I."/>
            <person name="Hart E."/>
            <person name="Haugen E."/>
            <person name="Heath P.D."/>
            <person name="Holmes S."/>
            <person name="Holt K."/>
            <person name="Howden P.J."/>
            <person name="Hunt A.R."/>
            <person name="Hunt S.E."/>
            <person name="Hunter G."/>
            <person name="Isherwood J."/>
            <person name="James R."/>
            <person name="Johnson C."/>
            <person name="Johnson D."/>
            <person name="Joy A."/>
            <person name="Kay M."/>
            <person name="Kershaw J.K."/>
            <person name="Kibukawa M."/>
            <person name="Kimberley A.M."/>
            <person name="King A."/>
            <person name="Knights A.J."/>
            <person name="Lad H."/>
            <person name="Laird G."/>
            <person name="Lawlor S."/>
            <person name="Leongamornlert D.A."/>
            <person name="Lloyd D.M."/>
            <person name="Loveland J."/>
            <person name="Lovell J."/>
            <person name="Lush M.J."/>
            <person name="Lyne R."/>
            <person name="Martin S."/>
            <person name="Mashreghi-Mohammadi M."/>
            <person name="Matthews L."/>
            <person name="Matthews N.S.W."/>
            <person name="McLaren S."/>
            <person name="Milne S."/>
            <person name="Mistry S."/>
            <person name="Moore M.J.F."/>
            <person name="Nickerson T."/>
            <person name="O'Dell C.N."/>
            <person name="Oliver K."/>
            <person name="Palmeiri A."/>
            <person name="Palmer S.A."/>
            <person name="Parker A."/>
            <person name="Patel D."/>
            <person name="Pearce A.V."/>
            <person name="Peck A.I."/>
            <person name="Pelan S."/>
            <person name="Phelps K."/>
            <person name="Phillimore B.J."/>
            <person name="Plumb R."/>
            <person name="Rajan J."/>
            <person name="Raymond C."/>
            <person name="Rouse G."/>
            <person name="Saenphimmachak C."/>
            <person name="Sehra H.K."/>
            <person name="Sheridan E."/>
            <person name="Shownkeen R."/>
            <person name="Sims S."/>
            <person name="Skuce C.D."/>
            <person name="Smith M."/>
            <person name="Steward C."/>
            <person name="Subramanian S."/>
            <person name="Sycamore N."/>
            <person name="Tracey A."/>
            <person name="Tromans A."/>
            <person name="Van Helmond Z."/>
            <person name="Wall M."/>
            <person name="Wallis J.M."/>
            <person name="White S."/>
            <person name="Whitehead S.L."/>
            <person name="Wilkinson J.E."/>
            <person name="Willey D.L."/>
            <person name="Williams H."/>
            <person name="Wilming L."/>
            <person name="Wray P.W."/>
            <person name="Wu Z."/>
            <person name="Coulson A."/>
            <person name="Vaudin M."/>
            <person name="Sulston J.E."/>
            <person name="Durbin R.M."/>
            <person name="Hubbard T."/>
            <person name="Wooster R."/>
            <person name="Dunham I."/>
            <person name="Carter N.P."/>
            <person name="McVean G."/>
            <person name="Ross M.T."/>
            <person name="Harrow J."/>
            <person name="Olson M.V."/>
            <person name="Beck S."/>
            <person name="Rogers J."/>
            <person name="Bentley D.R."/>
        </authorList>
    </citation>
    <scope>NUCLEOTIDE SEQUENCE [LARGE SCALE GENOMIC DNA]</scope>
</reference>
<reference key="6">
    <citation type="submission" date="2005-07" db="EMBL/GenBank/DDBJ databases">
        <authorList>
            <person name="Mural R.J."/>
            <person name="Istrail S."/>
            <person name="Sutton G.G."/>
            <person name="Florea L."/>
            <person name="Halpern A.L."/>
            <person name="Mobarry C.M."/>
            <person name="Lippert R."/>
            <person name="Walenz B."/>
            <person name="Shatkay H."/>
            <person name="Dew I."/>
            <person name="Miller J.R."/>
            <person name="Flanigan M.J."/>
            <person name="Edwards N.J."/>
            <person name="Bolanos R."/>
            <person name="Fasulo D."/>
            <person name="Halldorsson B.V."/>
            <person name="Hannenhalli S."/>
            <person name="Turner R."/>
            <person name="Yooseph S."/>
            <person name="Lu F."/>
            <person name="Nusskern D.R."/>
            <person name="Shue B.C."/>
            <person name="Zheng X.H."/>
            <person name="Zhong F."/>
            <person name="Delcher A.L."/>
            <person name="Huson D.H."/>
            <person name="Kravitz S.A."/>
            <person name="Mouchard L."/>
            <person name="Reinert K."/>
            <person name="Remington K.A."/>
            <person name="Clark A.G."/>
            <person name="Waterman M.S."/>
            <person name="Eichler E.E."/>
            <person name="Adams M.D."/>
            <person name="Hunkapiller M.W."/>
            <person name="Myers E.W."/>
            <person name="Venter J.C."/>
        </authorList>
    </citation>
    <scope>NUCLEOTIDE SEQUENCE [LARGE SCALE GENOMIC DNA]</scope>
</reference>
<reference key="7">
    <citation type="journal article" date="2004" name="Genome Res.">
        <title>The status, quality, and expansion of the NIH full-length cDNA project: the Mammalian Gene Collection (MGC).</title>
        <authorList>
            <consortium name="The MGC Project Team"/>
        </authorList>
    </citation>
    <scope>NUCLEOTIDE SEQUENCE [LARGE SCALE MRNA] (ISOFORM 1)</scope>
    <source>
        <tissue>Muscle</tissue>
    </source>
</reference>
<reference key="8">
    <citation type="submission" date="2009-10" db="UniProtKB">
        <authorList>
            <person name="Bienvenut W.V."/>
            <person name="Lempens A."/>
            <person name="Norman J.C."/>
        </authorList>
    </citation>
    <scope>PROTEIN SEQUENCE OF 2-34; 184-195 AND 352-363</scope>
    <scope>CLEAVAGE OF INITIATOR METHIONINE</scope>
    <scope>ACETYLATION AT ALA-2</scope>
    <scope>IDENTIFICATION BY MASS SPECTROMETRY</scope>
    <source>
        <tissue>Ovarian carcinoma</tissue>
    </source>
</reference>
<reference key="9">
    <citation type="journal article" date="2000" name="J. Cell Biol.">
        <title>PEX19 binds multiple peroxisomal membrane proteins, is predominantly cytoplasmic, and is required for peroxisome membrane synthesis.</title>
        <authorList>
            <person name="Sacksteder K.A."/>
            <person name="Jones J.M."/>
            <person name="South S.T."/>
            <person name="Li X."/>
            <person name="Liu Y."/>
            <person name="Gould S.J."/>
        </authorList>
    </citation>
    <scope>INTERACTION WITH PEX19</scope>
</reference>
<reference key="10">
    <citation type="journal article" date="2001" name="J. Biol. Chem.">
        <title>The di-aromatic pentapeptide repeats of the human peroxisome import receptor PEX5 are separate high affinity binding sites for the peroxisomal membrane protein PEX14.</title>
        <authorList>
            <person name="Saidowsky J."/>
            <person name="Dodt G."/>
            <person name="Kirchberg K."/>
            <person name="Wegner A."/>
            <person name="Nastainczyk W."/>
            <person name="Kunau W.-H."/>
            <person name="Schliebs W."/>
        </authorList>
    </citation>
    <scope>INTERACTION WITH PEX5</scope>
</reference>
<reference key="11">
    <citation type="journal article" date="2002" name="Biochim. Biophys. Acta">
        <title>Mammalian Pex14p: membrane topology and characterisation of the Pex14p-Pex14p interaction.</title>
        <authorList>
            <person name="Oliveira M.E."/>
            <person name="Reguenga C."/>
            <person name="Gouveia A.M."/>
            <person name="Guimaraes C.P."/>
            <person name="Schliebs W."/>
            <person name="Kunau W.H."/>
            <person name="Silva M.T."/>
            <person name="Sa-Miranda C."/>
            <person name="Azevedo J.E."/>
        </authorList>
    </citation>
    <scope>INTERACTION WITH PEX5 AND PEX19</scope>
</reference>
<reference key="12">
    <citation type="journal article" date="2004" name="Hum. Mutat.">
        <title>Identification of a new complementation group of the peroxisome biogenesis disorders and PEX14 as the mutated gene.</title>
        <authorList>
            <person name="Shimozawa N."/>
            <person name="Tsukamoto T."/>
            <person name="Nagase T."/>
            <person name="Takemoto Y."/>
            <person name="Koyama N."/>
            <person name="Suzuki Y."/>
            <person name="Komori M."/>
            <person name="Osumi T."/>
            <person name="Jeannette G."/>
            <person name="Wanders R.J."/>
            <person name="Kondo N."/>
        </authorList>
    </citation>
    <scope>INVOLVEMENT IN PBD-CGK AND PBD13A</scope>
</reference>
<reference key="13">
    <citation type="journal article" date="2006" name="Cell">
        <title>Global, in vivo, and site-specific phosphorylation dynamics in signaling networks.</title>
        <authorList>
            <person name="Olsen J.V."/>
            <person name="Blagoev B."/>
            <person name="Gnad F."/>
            <person name="Macek B."/>
            <person name="Kumar C."/>
            <person name="Mortensen P."/>
            <person name="Mann M."/>
        </authorList>
    </citation>
    <scope>PHOSPHORYLATION [LARGE SCALE ANALYSIS] AT SER-335</scope>
    <scope>IDENTIFICATION BY MASS SPECTROMETRY [LARGE SCALE ANALYSIS]</scope>
    <source>
        <tissue>Cervix carcinoma</tissue>
    </source>
</reference>
<reference key="14">
    <citation type="journal article" date="2009" name="Anal. Chem.">
        <title>Lys-N and trypsin cover complementary parts of the phosphoproteome in a refined SCX-based approach.</title>
        <authorList>
            <person name="Gauci S."/>
            <person name="Helbig A.O."/>
            <person name="Slijper M."/>
            <person name="Krijgsveld J."/>
            <person name="Heck A.J."/>
            <person name="Mohammed S."/>
        </authorList>
    </citation>
    <scope>ACETYLATION [LARGE SCALE ANALYSIS] AT ALA-2</scope>
    <scope>CLEAVAGE OF INITIATOR METHIONINE [LARGE SCALE ANALYSIS]</scope>
    <scope>IDENTIFICATION BY MASS SPECTROMETRY [LARGE SCALE ANALYSIS]</scope>
</reference>
<reference key="15">
    <citation type="journal article" date="2009" name="Science">
        <title>Lysine acetylation targets protein complexes and co-regulates major cellular functions.</title>
        <authorList>
            <person name="Choudhary C."/>
            <person name="Kumar C."/>
            <person name="Gnad F."/>
            <person name="Nielsen M.L."/>
            <person name="Rehman M."/>
            <person name="Walther T.C."/>
            <person name="Olsen J.V."/>
            <person name="Mann M."/>
        </authorList>
    </citation>
    <scope>ACETYLATION [LARGE SCALE ANALYSIS] AT LYS-34</scope>
    <scope>IDENTIFICATION BY MASS SPECTROMETRY [LARGE SCALE ANALYSIS]</scope>
</reference>
<reference key="16">
    <citation type="journal article" date="2011" name="BMC Syst. Biol.">
        <title>Initial characterization of the human central proteome.</title>
        <authorList>
            <person name="Burkard T.R."/>
            <person name="Planyavsky M."/>
            <person name="Kaupe I."/>
            <person name="Breitwieser F.P."/>
            <person name="Buerckstuemmer T."/>
            <person name="Bennett K.L."/>
            <person name="Superti-Furga G."/>
            <person name="Colinge J."/>
        </authorList>
    </citation>
    <scope>IDENTIFICATION BY MASS SPECTROMETRY [LARGE SCALE ANALYSIS]</scope>
</reference>
<reference key="17">
    <citation type="journal article" date="2011" name="J. Biol. Chem.">
        <title>PEX5 protein binds monomeric catalase blocking its tetramerization and releases it upon binding the N-terminal domain of PEX14.</title>
        <authorList>
            <person name="Freitas M.O."/>
            <person name="Francisco T."/>
            <person name="Rodrigues T.A."/>
            <person name="Alencastre I.S."/>
            <person name="Pinto M.P."/>
            <person name="Grou C.P."/>
            <person name="Carvalho A.F."/>
            <person name="Fransen M."/>
            <person name="Sa-Miranda C."/>
            <person name="Azevedo J.E."/>
        </authorList>
    </citation>
    <scope>INTERACTION WITH PEX5</scope>
</reference>
<reference key="18">
    <citation type="journal article" date="2011" name="Sci. Signal.">
        <title>System-wide temporal characterization of the proteome and phosphoproteome of human embryonic stem cell differentiation.</title>
        <authorList>
            <person name="Rigbolt K.T."/>
            <person name="Prokhorova T.A."/>
            <person name="Akimov V."/>
            <person name="Henningsen J."/>
            <person name="Johansen P.T."/>
            <person name="Kratchmarova I."/>
            <person name="Kassem M."/>
            <person name="Mann M."/>
            <person name="Olsen J.V."/>
            <person name="Blagoev B."/>
        </authorList>
    </citation>
    <scope>IDENTIFICATION BY MASS SPECTROMETRY [LARGE SCALE ANALYSIS]</scope>
</reference>
<reference key="19">
    <citation type="journal article" date="2012" name="Proc. Natl. Acad. Sci. U.S.A.">
        <title>N-terminal acetylome analyses and functional insights of the N-terminal acetyltransferase NatB.</title>
        <authorList>
            <person name="Van Damme P."/>
            <person name="Lasa M."/>
            <person name="Polevoda B."/>
            <person name="Gazquez C."/>
            <person name="Elosegui-Artola A."/>
            <person name="Kim D.S."/>
            <person name="De Juan-Pardo E."/>
            <person name="Demeyer K."/>
            <person name="Hole K."/>
            <person name="Larrea E."/>
            <person name="Timmerman E."/>
            <person name="Prieto J."/>
            <person name="Arnesen T."/>
            <person name="Sherman F."/>
            <person name="Gevaert K."/>
            <person name="Aldabe R."/>
        </authorList>
    </citation>
    <scope>ACETYLATION [LARGE SCALE ANALYSIS] AT ALA-2</scope>
    <scope>CLEAVAGE OF INITIATOR METHIONINE [LARGE SCALE ANALYSIS]</scope>
    <scope>IDENTIFICATION BY MASS SPECTROMETRY [LARGE SCALE ANALYSIS]</scope>
</reference>
<reference key="20">
    <citation type="journal article" date="2013" name="J. Proteome Res.">
        <title>Toward a comprehensive characterization of a human cancer cell phosphoproteome.</title>
        <authorList>
            <person name="Zhou H."/>
            <person name="Di Palma S."/>
            <person name="Preisinger C."/>
            <person name="Peng M."/>
            <person name="Polat A.N."/>
            <person name="Heck A.J."/>
            <person name="Mohammed S."/>
        </authorList>
    </citation>
    <scope>PHOSPHORYLATION [LARGE SCALE ANALYSIS] AT SER-232</scope>
    <scope>IDENTIFICATION BY MASS SPECTROMETRY [LARGE SCALE ANALYSIS]</scope>
    <source>
        <tissue>Cervix carcinoma</tissue>
        <tissue>Erythroleukemia</tissue>
    </source>
</reference>
<reference key="21">
    <citation type="journal article" date="2014" name="J. Proteomics">
        <title>An enzyme assisted RP-RPLC approach for in-depth analysis of human liver phosphoproteome.</title>
        <authorList>
            <person name="Bian Y."/>
            <person name="Song C."/>
            <person name="Cheng K."/>
            <person name="Dong M."/>
            <person name="Wang F."/>
            <person name="Huang J."/>
            <person name="Sun D."/>
            <person name="Wang L."/>
            <person name="Ye M."/>
            <person name="Zou H."/>
        </authorList>
    </citation>
    <scope>IDENTIFICATION BY MASS SPECTROMETRY [LARGE SCALE ANALYSIS]</scope>
    <source>
        <tissue>Liver</tissue>
    </source>
</reference>
<reference key="22">
    <citation type="journal article" date="2015" name="Proteomics">
        <title>N-terminome analysis of the human mitochondrial proteome.</title>
        <authorList>
            <person name="Vaca Jacome A.S."/>
            <person name="Rabilloud T."/>
            <person name="Schaeffer-Reiss C."/>
            <person name="Rompais M."/>
            <person name="Ayoub D."/>
            <person name="Lane L."/>
            <person name="Bairoch A."/>
            <person name="Van Dorsselaer A."/>
            <person name="Carapito C."/>
        </authorList>
    </citation>
    <scope>ACETYLATION [LARGE SCALE ANALYSIS] AT ALA-2</scope>
    <scope>CLEAVAGE OF INITIATOR METHIONINE [LARGE SCALE ANALYSIS]</scope>
    <scope>IDENTIFICATION BY MASS SPECTROMETRY [LARGE SCALE ANALYSIS]</scope>
</reference>
<reference key="23">
    <citation type="journal article" date="2017" name="J. Biol. Chem.">
        <title>The peroxisomal matrix protein translocon is a large cavity-forming protein assembly into which PEX5 protein enters to release its cargo.</title>
        <authorList>
            <person name="Dias A.F."/>
            <person name="Rodrigues T.A."/>
            <person name="Pedrosa A.G."/>
            <person name="Barros-Barbosa A."/>
            <person name="Francisco T."/>
            <person name="Azevedo J.E."/>
        </authorList>
    </citation>
    <scope>FUNCTION</scope>
    <scope>INTERACTION WITH PEX13 AND PEX5</scope>
</reference>
<reference key="24">
    <citation type="journal article" date="2009" name="EMBO J.">
        <title>Structural basis for competitive interactions of Pex14 with the import receptors Pex5 and Pex19.</title>
        <authorList>
            <person name="Neufeld C."/>
            <person name="Filipp F.V."/>
            <person name="Simon B."/>
            <person name="Neuhaus A."/>
            <person name="Schueller N."/>
            <person name="David C."/>
            <person name="Kooshapur H."/>
            <person name="Madl T."/>
            <person name="Erdmann R."/>
            <person name="Schliebs W."/>
            <person name="Wilmanns M."/>
            <person name="Sattler M."/>
        </authorList>
    </citation>
    <scope>STRUCTURE BY NMR OF 16-80 IN COMPLEXES WITH PEX5 AND PEX19</scope>
    <scope>MUTAGENESIS OF PHE-52 AND LYS-56</scope>
    <scope>SUBCELLULAR LOCATION</scope>
    <scope>INTERACTION WITH PEX5 AND PEX19</scope>
</reference>
<reference evidence="20" key="25">
    <citation type="journal article" date="2014" name="J. Biol. Chem.">
        <title>A novel Pex14 protein-interacting site of human Pex5 is critical for matrix protein import into peroxisomes.</title>
        <authorList>
            <person name="Neuhaus A."/>
            <person name="Kooshapur H."/>
            <person name="Wolf J."/>
            <person name="Meyer N.H."/>
            <person name="Madl T."/>
            <person name="Saidowsky J."/>
            <person name="Hambruch E."/>
            <person name="Lazam A."/>
            <person name="Jung M."/>
            <person name="Sattler M."/>
            <person name="Schliebs W."/>
            <person name="Erdmann R."/>
        </authorList>
    </citation>
    <scope>STRUCTURE BY NMR OF 16-80 IN COMPLEX WITH PEX5</scope>
    <scope>INTERACTION WITH PEX5</scope>
</reference>
<reference key="26">
    <citation type="journal article" date="2011" name="J. Cell Sci.">
        <title>PEX14 is required for microtubule-based peroxisome motility in human cells.</title>
        <authorList>
            <person name="Bharti P."/>
            <person name="Schliebs W."/>
            <person name="Schievelbusch T."/>
            <person name="Neuhaus A."/>
            <person name="David C."/>
            <person name="Kock K."/>
            <person name="Herrmann C."/>
            <person name="Meyer H.E."/>
            <person name="Wiese S."/>
            <person name="Warscheid B."/>
            <person name="Theiss C."/>
            <person name="Erdmann R."/>
        </authorList>
    </citation>
    <scope>FUNCTION</scope>
    <scope>INTERACTION WITH TUBULIN</scope>
</reference>
<dbReference type="EMBL" id="AF045186">
    <property type="protein sequence ID" value="AAC39843.1"/>
    <property type="molecule type" value="mRNA"/>
</dbReference>
<dbReference type="EMBL" id="AB017546">
    <property type="protein sequence ID" value="BAA36837.1"/>
    <property type="molecule type" value="mRNA"/>
</dbReference>
<dbReference type="EMBL" id="AK002194">
    <property type="protein sequence ID" value="BAG51028.1"/>
    <property type="molecule type" value="mRNA"/>
</dbReference>
<dbReference type="EMBL" id="AK293684">
    <property type="protein sequence ID" value="BAH11568.1"/>
    <property type="molecule type" value="mRNA"/>
</dbReference>
<dbReference type="EMBL" id="AK313046">
    <property type="protein sequence ID" value="BAG35878.1"/>
    <property type="molecule type" value="mRNA"/>
</dbReference>
<dbReference type="EMBL" id="CR450321">
    <property type="protein sequence ID" value="CAG29317.1"/>
    <property type="molecule type" value="mRNA"/>
</dbReference>
<dbReference type="EMBL" id="CR542083">
    <property type="protein sequence ID" value="CAG46880.1"/>
    <property type="molecule type" value="mRNA"/>
</dbReference>
<dbReference type="EMBL" id="AL139423">
    <property type="status" value="NOT_ANNOTATED_CDS"/>
    <property type="molecule type" value="Genomic_DNA"/>
</dbReference>
<dbReference type="EMBL" id="AL354956">
    <property type="status" value="NOT_ANNOTATED_CDS"/>
    <property type="molecule type" value="Genomic_DNA"/>
</dbReference>
<dbReference type="EMBL" id="AL591403">
    <property type="status" value="NOT_ANNOTATED_CDS"/>
    <property type="molecule type" value="Genomic_DNA"/>
</dbReference>
<dbReference type="EMBL" id="CH471130">
    <property type="protein sequence ID" value="EAW71661.1"/>
    <property type="molecule type" value="Genomic_DNA"/>
</dbReference>
<dbReference type="EMBL" id="BC006327">
    <property type="protein sequence ID" value="AAH06327.1"/>
    <property type="molecule type" value="mRNA"/>
</dbReference>
<dbReference type="CCDS" id="CCDS30582.1">
    <molecule id="O75381-1"/>
</dbReference>
<dbReference type="RefSeq" id="NP_004556.1">
    <molecule id="O75381-1"/>
    <property type="nucleotide sequence ID" value="NM_004565.3"/>
</dbReference>
<dbReference type="RefSeq" id="XP_011539882.1">
    <molecule id="O75381-2"/>
    <property type="nucleotide sequence ID" value="XM_011541580.2"/>
</dbReference>
<dbReference type="RefSeq" id="XP_054192993.1">
    <molecule id="O75381-2"/>
    <property type="nucleotide sequence ID" value="XM_054337018.1"/>
</dbReference>
<dbReference type="PDB" id="2W84">
    <property type="method" value="NMR"/>
    <property type="chains" value="A=16-80"/>
</dbReference>
<dbReference type="PDB" id="2W85">
    <property type="method" value="NMR"/>
    <property type="chains" value="A=16-80"/>
</dbReference>
<dbReference type="PDB" id="4BXU">
    <property type="method" value="NMR"/>
    <property type="chains" value="A=16-80"/>
</dbReference>
<dbReference type="PDB" id="9GAG">
    <property type="method" value="NMR"/>
    <property type="chains" value="B=237-245"/>
</dbReference>
<dbReference type="PDBsum" id="2W84"/>
<dbReference type="PDBsum" id="2W85"/>
<dbReference type="PDBsum" id="4BXU"/>
<dbReference type="PDBsum" id="9GAG"/>
<dbReference type="BMRB" id="O75381"/>
<dbReference type="SASBDB" id="O75381"/>
<dbReference type="SMR" id="O75381"/>
<dbReference type="BioGRID" id="111218">
    <property type="interactions" value="238"/>
</dbReference>
<dbReference type="ComplexPortal" id="CPX-10021">
    <property type="entry name" value="Peroxisomal PEX13-PEX14 docking complex"/>
</dbReference>
<dbReference type="CORUM" id="O75381"/>
<dbReference type="ELM" id="O75381"/>
<dbReference type="FunCoup" id="O75381">
    <property type="interactions" value="2246"/>
</dbReference>
<dbReference type="IntAct" id="O75381">
    <property type="interactions" value="126"/>
</dbReference>
<dbReference type="MINT" id="O75381"/>
<dbReference type="STRING" id="9606.ENSP00000349016"/>
<dbReference type="BindingDB" id="O75381"/>
<dbReference type="ChEMBL" id="CHEMBL4523152"/>
<dbReference type="TCDB" id="3.A.20.1.1">
    <property type="family name" value="the peroxisomal protein importer (ppi) family"/>
</dbReference>
<dbReference type="GlyGen" id="O75381">
    <property type="glycosylation" value="5 sites, 2 N-linked glycans (2 sites), 1 O-linked glycan (2 sites)"/>
</dbReference>
<dbReference type="iPTMnet" id="O75381"/>
<dbReference type="PhosphoSitePlus" id="O75381"/>
<dbReference type="BioMuta" id="PEX14"/>
<dbReference type="jPOST" id="O75381"/>
<dbReference type="MassIVE" id="O75381"/>
<dbReference type="PaxDb" id="9606-ENSP00000349016"/>
<dbReference type="PeptideAtlas" id="O75381"/>
<dbReference type="ProteomicsDB" id="49953">
    <molecule id="O75381-1"/>
</dbReference>
<dbReference type="ProteomicsDB" id="49954">
    <molecule id="O75381-2"/>
</dbReference>
<dbReference type="Pumba" id="O75381"/>
<dbReference type="TopDownProteomics" id="O75381-2">
    <molecule id="O75381-2"/>
</dbReference>
<dbReference type="Antibodypedia" id="27930">
    <property type="antibodies" value="311 antibodies from 33 providers"/>
</dbReference>
<dbReference type="DNASU" id="5195"/>
<dbReference type="Ensembl" id="ENST00000356607.9">
    <molecule id="O75381-1"/>
    <property type="protein sequence ID" value="ENSP00000349016.4"/>
    <property type="gene ID" value="ENSG00000142655.13"/>
</dbReference>
<dbReference type="GeneID" id="5195"/>
<dbReference type="KEGG" id="hsa:5195"/>
<dbReference type="MANE-Select" id="ENST00000356607.9">
    <property type="protein sequence ID" value="ENSP00000349016.4"/>
    <property type="RefSeq nucleotide sequence ID" value="NM_004565.3"/>
    <property type="RefSeq protein sequence ID" value="NP_004556.1"/>
</dbReference>
<dbReference type="UCSC" id="uc001arn.5">
    <molecule id="O75381-1"/>
    <property type="organism name" value="human"/>
</dbReference>
<dbReference type="AGR" id="HGNC:8856"/>
<dbReference type="CTD" id="5195"/>
<dbReference type="DisGeNET" id="5195"/>
<dbReference type="GeneCards" id="PEX14"/>
<dbReference type="GeneReviews" id="PEX14"/>
<dbReference type="HGNC" id="HGNC:8856">
    <property type="gene designation" value="PEX14"/>
</dbReference>
<dbReference type="HPA" id="ENSG00000142655">
    <property type="expression patterns" value="Low tissue specificity"/>
</dbReference>
<dbReference type="MalaCards" id="PEX14"/>
<dbReference type="MIM" id="601791">
    <property type="type" value="gene"/>
</dbReference>
<dbReference type="MIM" id="614887">
    <property type="type" value="phenotype"/>
</dbReference>
<dbReference type="neXtProt" id="NX_O75381"/>
<dbReference type="OpenTargets" id="ENSG00000142655"/>
<dbReference type="Orphanet" id="772">
    <property type="disease" value="Infantile Refsum disease"/>
</dbReference>
<dbReference type="Orphanet" id="44">
    <property type="disease" value="Neonatal adrenoleukodystrophy"/>
</dbReference>
<dbReference type="Orphanet" id="912">
    <property type="disease" value="Zellweger syndrome"/>
</dbReference>
<dbReference type="PharmGKB" id="PA33198"/>
<dbReference type="VEuPathDB" id="HostDB:ENSG00000142655"/>
<dbReference type="eggNOG" id="KOG2629">
    <property type="taxonomic scope" value="Eukaryota"/>
</dbReference>
<dbReference type="GeneTree" id="ENSGT00390000015047"/>
<dbReference type="HOGENOM" id="CLU_065928_0_0_1"/>
<dbReference type="InParanoid" id="O75381"/>
<dbReference type="OMA" id="YNQWQPP"/>
<dbReference type="OrthoDB" id="441517at2759"/>
<dbReference type="PAN-GO" id="O75381">
    <property type="GO annotations" value="4 GO annotations based on evolutionary models"/>
</dbReference>
<dbReference type="PhylomeDB" id="O75381"/>
<dbReference type="TreeFam" id="TF323535"/>
<dbReference type="PathwayCommons" id="O75381"/>
<dbReference type="Reactome" id="R-HSA-8866654">
    <property type="pathway name" value="E3 ubiquitin ligases ubiquitinate target proteins"/>
</dbReference>
<dbReference type="Reactome" id="R-HSA-9033241">
    <property type="pathway name" value="Peroxisomal protein import"/>
</dbReference>
<dbReference type="Reactome" id="R-HSA-9603798">
    <property type="pathway name" value="Class I peroxisomal membrane protein import"/>
</dbReference>
<dbReference type="SignaLink" id="O75381"/>
<dbReference type="SIGNOR" id="O75381"/>
<dbReference type="BioGRID-ORCS" id="5195">
    <property type="hits" value="36 hits in 1163 CRISPR screens"/>
</dbReference>
<dbReference type="ChiTaRS" id="PEX14">
    <property type="organism name" value="human"/>
</dbReference>
<dbReference type="EvolutionaryTrace" id="O75381"/>
<dbReference type="GeneWiki" id="PEX14"/>
<dbReference type="GenomeRNAi" id="5195"/>
<dbReference type="Pharos" id="O75381">
    <property type="development level" value="Tbio"/>
</dbReference>
<dbReference type="PRO" id="PR:O75381"/>
<dbReference type="Proteomes" id="UP000005640">
    <property type="component" value="Chromosome 1"/>
</dbReference>
<dbReference type="RNAct" id="O75381">
    <property type="molecule type" value="protein"/>
</dbReference>
<dbReference type="Bgee" id="ENSG00000142655">
    <property type="expression patterns" value="Expressed in bronchial epithelial cell and 196 other cell types or tissues"/>
</dbReference>
<dbReference type="ExpressionAtlas" id="O75381">
    <property type="expression patterns" value="baseline and differential"/>
</dbReference>
<dbReference type="GO" id="GO:0005829">
    <property type="term" value="C:cytosol"/>
    <property type="evidence" value="ECO:0000304"/>
    <property type="project" value="Reactome"/>
</dbReference>
<dbReference type="GO" id="GO:0001650">
    <property type="term" value="C:fibrillar center"/>
    <property type="evidence" value="ECO:0000314"/>
    <property type="project" value="HPA"/>
</dbReference>
<dbReference type="GO" id="GO:0016020">
    <property type="term" value="C:membrane"/>
    <property type="evidence" value="ECO:0007005"/>
    <property type="project" value="UniProtKB"/>
</dbReference>
<dbReference type="GO" id="GO:0005634">
    <property type="term" value="C:nucleus"/>
    <property type="evidence" value="ECO:0000303"/>
    <property type="project" value="UniProtKB"/>
</dbReference>
<dbReference type="GO" id="GO:1990429">
    <property type="term" value="C:peroxisomal importomer complex"/>
    <property type="evidence" value="ECO:0000318"/>
    <property type="project" value="GO_Central"/>
</dbReference>
<dbReference type="GO" id="GO:0005778">
    <property type="term" value="C:peroxisomal membrane"/>
    <property type="evidence" value="ECO:0000314"/>
    <property type="project" value="UniProtKB"/>
</dbReference>
<dbReference type="GO" id="GO:0005777">
    <property type="term" value="C:peroxisome"/>
    <property type="evidence" value="ECO:0000314"/>
    <property type="project" value="HPA"/>
</dbReference>
<dbReference type="GO" id="GO:0032991">
    <property type="term" value="C:protein-containing complex"/>
    <property type="evidence" value="ECO:0000314"/>
    <property type="project" value="UniProtKB"/>
</dbReference>
<dbReference type="GO" id="GO:0048487">
    <property type="term" value="F:beta-tubulin binding"/>
    <property type="evidence" value="ECO:0000353"/>
    <property type="project" value="UniProtKB"/>
</dbReference>
<dbReference type="GO" id="GO:0042802">
    <property type="term" value="F:identical protein binding"/>
    <property type="evidence" value="ECO:0000353"/>
    <property type="project" value="UniProtKB"/>
</dbReference>
<dbReference type="GO" id="GO:0008017">
    <property type="term" value="F:microtubule binding"/>
    <property type="evidence" value="ECO:0000314"/>
    <property type="project" value="UniProtKB"/>
</dbReference>
<dbReference type="GO" id="GO:0008320">
    <property type="term" value="F:protein transmembrane transporter activity"/>
    <property type="evidence" value="ECO:0000314"/>
    <property type="project" value="UniProtKB"/>
</dbReference>
<dbReference type="GO" id="GO:0030674">
    <property type="term" value="F:protein-macromolecule adaptor activity"/>
    <property type="evidence" value="ECO:0000314"/>
    <property type="project" value="UniProtKB"/>
</dbReference>
<dbReference type="GO" id="GO:0005102">
    <property type="term" value="F:signaling receptor binding"/>
    <property type="evidence" value="ECO:0000353"/>
    <property type="project" value="UniProtKB"/>
</dbReference>
<dbReference type="GO" id="GO:0003714">
    <property type="term" value="F:transcription corepressor activity"/>
    <property type="evidence" value="ECO:0000314"/>
    <property type="project" value="UniProtKB"/>
</dbReference>
<dbReference type="GO" id="GO:0034614">
    <property type="term" value="P:cellular response to reactive oxygen species"/>
    <property type="evidence" value="ECO:0000314"/>
    <property type="project" value="UniProt"/>
</dbReference>
<dbReference type="GO" id="GO:0034453">
    <property type="term" value="P:microtubule anchoring"/>
    <property type="evidence" value="ECO:0000314"/>
    <property type="project" value="UniProtKB"/>
</dbReference>
<dbReference type="GO" id="GO:0043433">
    <property type="term" value="P:negative regulation of DNA-binding transcription factor activity"/>
    <property type="evidence" value="ECO:0000314"/>
    <property type="project" value="UniProtKB"/>
</dbReference>
<dbReference type="GO" id="GO:0045892">
    <property type="term" value="P:negative regulation of DNA-templated transcription"/>
    <property type="evidence" value="ECO:0000314"/>
    <property type="project" value="UniProtKB"/>
</dbReference>
<dbReference type="GO" id="GO:0032091">
    <property type="term" value="P:negative regulation of protein binding"/>
    <property type="evidence" value="ECO:0000314"/>
    <property type="project" value="UniProtKB"/>
</dbReference>
<dbReference type="GO" id="GO:0007031">
    <property type="term" value="P:peroxisome organization"/>
    <property type="evidence" value="ECO:0000250"/>
    <property type="project" value="UniProtKB"/>
</dbReference>
<dbReference type="GO" id="GO:0036250">
    <property type="term" value="P:peroxisome transport along microtubule"/>
    <property type="evidence" value="ECO:0000314"/>
    <property type="project" value="UniProtKB"/>
</dbReference>
<dbReference type="GO" id="GO:0016558">
    <property type="term" value="P:protein import into peroxisome matrix"/>
    <property type="evidence" value="ECO:0000315"/>
    <property type="project" value="UniProtKB"/>
</dbReference>
<dbReference type="GO" id="GO:0016560">
    <property type="term" value="P:protein import into peroxisome matrix, docking"/>
    <property type="evidence" value="ECO:0000314"/>
    <property type="project" value="UniProtKB"/>
</dbReference>
<dbReference type="GO" id="GO:0044721">
    <property type="term" value="P:protein import into peroxisome matrix, substrate release"/>
    <property type="evidence" value="ECO:0000314"/>
    <property type="project" value="UniProtKB"/>
</dbReference>
<dbReference type="GO" id="GO:0016561">
    <property type="term" value="P:protein import into peroxisome matrix, translocation"/>
    <property type="evidence" value="ECO:0000314"/>
    <property type="project" value="UniProtKB"/>
</dbReference>
<dbReference type="GO" id="GO:0065003">
    <property type="term" value="P:protein-containing complex assembly"/>
    <property type="evidence" value="ECO:0000314"/>
    <property type="project" value="UniProtKB"/>
</dbReference>
<dbReference type="FunFam" id="1.10.10.10:FF:000296">
    <property type="entry name" value="Peroxisomal membrane protein PEX14"/>
    <property type="match status" value="1"/>
</dbReference>
<dbReference type="Gene3D" id="1.10.10.10">
    <property type="entry name" value="Winged helix-like DNA-binding domain superfamily/Winged helix DNA-binding domain"/>
    <property type="match status" value="1"/>
</dbReference>
<dbReference type="InterPro" id="IPR025655">
    <property type="entry name" value="PEX14"/>
</dbReference>
<dbReference type="InterPro" id="IPR006785">
    <property type="entry name" value="Pex14_N"/>
</dbReference>
<dbReference type="InterPro" id="IPR036388">
    <property type="entry name" value="WH-like_DNA-bd_sf"/>
</dbReference>
<dbReference type="PANTHER" id="PTHR23058">
    <property type="entry name" value="PEROXISOMAL MEMBRANE PROTEIN PEX14"/>
    <property type="match status" value="1"/>
</dbReference>
<dbReference type="PANTHER" id="PTHR23058:SF0">
    <property type="entry name" value="PEROXISOMAL MEMBRANE PROTEIN PEX14"/>
    <property type="match status" value="1"/>
</dbReference>
<dbReference type="Pfam" id="PF04695">
    <property type="entry name" value="Pex14_N"/>
    <property type="match status" value="1"/>
</dbReference>
<proteinExistence type="evidence at protein level"/>
<accession>O75381</accession>
<accession>B2R7N1</accession>
<accession>B3KML6</accession>
<accession>B7Z1N2</accession>
<accession>Q8WX51</accession>
<keyword id="KW-0002">3D-structure</keyword>
<keyword id="KW-0007">Acetylation</keyword>
<keyword id="KW-0025">Alternative splicing</keyword>
<keyword id="KW-0903">Direct protein sequencing</keyword>
<keyword id="KW-0472">Membrane</keyword>
<keyword id="KW-0576">Peroxisome</keyword>
<keyword id="KW-0958">Peroxisome biogenesis disorder</keyword>
<keyword id="KW-0597">Phosphoprotein</keyword>
<keyword id="KW-0653">Protein transport</keyword>
<keyword id="KW-1267">Proteomics identification</keyword>
<keyword id="KW-1185">Reference proteome</keyword>
<keyword id="KW-0811">Translocation</keyword>
<keyword id="KW-0812">Transmembrane</keyword>
<keyword id="KW-1133">Transmembrane helix</keyword>
<keyword id="KW-0813">Transport</keyword>
<keyword id="KW-0861">Zellweger syndrome</keyword>